<organism>
    <name type="scientific">Fowlpox virus (strain NVSL)</name>
    <name type="common">FPV</name>
    <dbReference type="NCBI Taxonomy" id="928301"/>
    <lineage>
        <taxon>Viruses</taxon>
        <taxon>Varidnaviria</taxon>
        <taxon>Bamfordvirae</taxon>
        <taxon>Nucleocytoviricota</taxon>
        <taxon>Pokkesviricetes</taxon>
        <taxon>Chitovirales</taxon>
        <taxon>Poxviridae</taxon>
        <taxon>Chordopoxvirinae</taxon>
        <taxon>Avipoxvirus</taxon>
        <taxon>Fowlpox virus</taxon>
    </lineage>
</organism>
<reference key="1">
    <citation type="journal article" date="1988" name="J. Gen. Virol.">
        <title>Sequence analysis of an 11.2 kilobase, near-terminal, BamHI fragment of fowlpox virus.</title>
        <authorList>
            <person name="Tomley F."/>
            <person name="Binns M."/>
            <person name="Campbell J."/>
            <person name="Boursnell M.E.G."/>
        </authorList>
    </citation>
    <scope>NUCLEOTIDE SEQUENCE [GENOMIC DNA]</scope>
    <source>
        <strain>FP-9 / Isolate HP-438</strain>
    </source>
</reference>
<reference key="2">
    <citation type="journal article" date="2000" name="J. Virol.">
        <title>The genome of fowlpox virus.</title>
        <authorList>
            <person name="Afonso C.L."/>
            <person name="Tulman E.R."/>
            <person name="Lu Z."/>
            <person name="Zsak L."/>
            <person name="Kutish G.F."/>
            <person name="Rock D.L."/>
        </authorList>
    </citation>
    <scope>NUCLEOTIDE SEQUENCE [LARGE SCALE GENOMIC DNA]</scope>
</reference>
<sequence>MESTSIILRYYVAVYPPPFFKYTLSRFIKLKNAFKLLIIKLKKQIMIYREVLNTYIIQWIV</sequence>
<gene>
    <name type="ordered locus">FPV238</name>
</gene>
<dbReference type="EMBL" id="D00295">
    <property type="protein sequence ID" value="BAA00202.1"/>
    <property type="molecule type" value="Genomic_DNA"/>
</dbReference>
<dbReference type="EMBL" id="AF198100">
    <property type="protein sequence ID" value="AAF44582.1"/>
    <property type="molecule type" value="Genomic_DNA"/>
</dbReference>
<dbReference type="PIR" id="JT0460">
    <property type="entry name" value="JT0460"/>
</dbReference>
<dbReference type="RefSeq" id="NP_039202.1">
    <property type="nucleotide sequence ID" value="NC_002188.1"/>
</dbReference>
<dbReference type="SMR" id="Q9YPJ6"/>
<dbReference type="GeneID" id="1486810"/>
<dbReference type="KEGG" id="vg:1486810"/>
<dbReference type="Proteomes" id="UP000008597">
    <property type="component" value="Segment"/>
</dbReference>
<proteinExistence type="predicted"/>
<accession>Q9YPJ6</accession>
<protein>
    <recommendedName>
        <fullName>Uncharacterized protein FPV238</fullName>
    </recommendedName>
    <alternativeName>
        <fullName>ORF f</fullName>
    </alternativeName>
</protein>
<keyword id="KW-0244">Early protein</keyword>
<keyword id="KW-1185">Reference proteome</keyword>
<organismHost>
    <name type="scientific">Vertebrata</name>
    <dbReference type="NCBI Taxonomy" id="7742"/>
</organismHost>
<name>V238_FOWPN</name>
<feature type="chain" id="PRO_0000099734" description="Uncharacterized protein FPV238">
    <location>
        <begin position="1"/>
        <end position="61"/>
    </location>
</feature>